<accession>Q06687</accession>
<name>VLF1_NPVAC</name>
<sequence>MNGFNVRNENNFNSWKIKIQSAPRFESVFDLATDRQRCTPDEVKNNSLWSKYMFPKPFAPTTLKSYKSRFIKIVYCSVDDVHLEDMSYSLDKEFDSIENQTLLIDPQELCRRMLELRSVTKETLQLTINFYTNMMNLPEYKIPRMVMLPRDKELKNIREKEKNLMLKNVIDTILNFINDKIKMLNSDYVHDRGLIRGAIVFCIMLGTGMRINEARQLSVDDLNVLIKRGKLHSDTINLKRKRSRNNTLNNIKMKPLELAREIYSRNPTILQISKNTSTPFKDFRRLLEESGVEMERPRSNMIRHYLSSNLYNSGVPLQKVAKLMNHESSASTKHYLNKYNIGLDETSSEEENNNDDDDAQHNRNSSGSSGESLLYYRNE</sequence>
<evidence type="ECO:0000255" key="1">
    <source>
        <dbReference type="PROSITE-ProRule" id="PRU01246"/>
    </source>
</evidence>
<evidence type="ECO:0000256" key="2">
    <source>
        <dbReference type="SAM" id="MobiDB-lite"/>
    </source>
</evidence>
<evidence type="ECO:0000269" key="3">
    <source>
    </source>
</evidence>
<evidence type="ECO:0000269" key="4">
    <source>
    </source>
</evidence>
<evidence type="ECO:0000269" key="5">
    <source>
    </source>
</evidence>
<reference key="1">
    <citation type="journal article" date="1994" name="Virology">
        <title>The complete DNA sequence of Autographa californica nuclear polyhedrosis virus.</title>
        <authorList>
            <person name="Ayres M.D."/>
            <person name="Howard S.C."/>
            <person name="Kuzio J."/>
            <person name="Lopez-Ferber M."/>
            <person name="Possee R.D."/>
        </authorList>
    </citation>
    <scope>NUCLEOTIDE SEQUENCE [LARGE SCALE GENOMIC DNA]</scope>
    <source>
        <strain>C6</strain>
    </source>
</reference>
<reference key="2">
    <citation type="journal article" date="1994" name="J. Gen. Virol.">
        <title>Nucleotide sequence and genetic organization of a 7.3 kb region (map unit 47 to 52.5) of Autographa californica nuclear polyhedrosis virus fragment EcoRI-C.</title>
        <authorList>
            <person name="Kool M."/>
            <person name="Broer R."/>
            <person name="Zuidema D."/>
            <person name="Goldbach R.W."/>
            <person name="Vlak J.M."/>
        </authorList>
    </citation>
    <scope>NUCLEOTIDE SEQUENCE [GENOMIC DNA]</scope>
    <source>
        <strain>E2</strain>
    </source>
</reference>
<reference key="3">
    <citation type="journal article" date="1994" name="J. Virol.">
        <title>Identification and characterization of vlf-1, a baculovirus gene involved in very late gene expression.</title>
        <authorList>
            <person name="McLachlin J.R."/>
            <person name="Miller L.K."/>
        </authorList>
    </citation>
    <scope>NUCLEOTIDE SEQUENCE [GENOMIC DNA]</scope>
    <scope>CHARACTERIZATION</scope>
    <source>
        <strain>L1</strain>
    </source>
</reference>
<reference key="4">
    <citation type="journal article" date="2002" name="BMC Mol. Biol.">
        <title>Binding of the baculovirus very late expression factor 1 (VLF-1) to different DNA structures.</title>
        <authorList>
            <person name="Mikhailov V.S."/>
            <person name="Rohrmann G.F."/>
        </authorList>
    </citation>
    <scope>FUNCTION</scope>
</reference>
<reference key="5">
    <citation type="journal article" date="2005" name="Virus Genes">
        <title>vlf-1 deletion brought AcMNPV to defect in nucleocapsid formation.</title>
        <authorList>
            <person name="Li Y."/>
            <person name="Wang J."/>
            <person name="Deng R."/>
            <person name="Zhang Q."/>
            <person name="Yang K."/>
            <person name="Wang X."/>
        </authorList>
    </citation>
    <scope>FUNCTION</scope>
</reference>
<reference key="6">
    <citation type="journal article" date="2006" name="J. Virol.">
        <title>Characterization of the role of very late expression factor 1 in baculovirus capsid structure and DNA processing.</title>
        <authorList>
            <person name="Vanarsdall A.L."/>
            <person name="Okano K."/>
            <person name="Rohrmann G.F."/>
        </authorList>
    </citation>
    <scope>FUNCTION</scope>
</reference>
<proteinExistence type="evidence at protein level"/>
<comment type="function">
    <text evidence="3 4 5">Plays a role in nucleocapsid assembly and serves an essential function during the final stages of the DNA packaging process. Participates in the processing of branched DNA molecules at the late stages of viral genome replication.</text>
</comment>
<comment type="similarity">
    <text evidence="1">Belongs to the 'phage' integrase family.</text>
</comment>
<feature type="chain" id="PRO_0000132875" description="Very late expression factor 1">
    <location>
        <begin position="1"/>
        <end position="379"/>
    </location>
</feature>
<feature type="domain" description="Tyr recombinase" evidence="1">
    <location>
        <begin position="169"/>
        <end position="348"/>
    </location>
</feature>
<feature type="region of interest" description="Disordered" evidence="2">
    <location>
        <begin position="346"/>
        <end position="379"/>
    </location>
</feature>
<feature type="compositionally biased region" description="Acidic residues" evidence="2">
    <location>
        <begin position="346"/>
        <end position="358"/>
    </location>
</feature>
<feature type="compositionally biased region" description="Low complexity" evidence="2">
    <location>
        <begin position="362"/>
        <end position="379"/>
    </location>
</feature>
<feature type="active site" evidence="1">
    <location>
        <position position="210"/>
    </location>
</feature>
<feature type="active site" evidence="1">
    <location>
        <position position="239"/>
    </location>
</feature>
<feature type="active site" evidence="1">
    <location>
        <position position="303"/>
    </location>
</feature>
<feature type="active site" evidence="1">
    <location>
        <position position="326"/>
    </location>
</feature>
<feature type="active site" description="O-(3'-phospho-DNA)-tyrosine intermediate" evidence="1">
    <location>
        <position position="335"/>
    </location>
</feature>
<organismHost>
    <name type="scientific">Lepidoptera</name>
    <name type="common">butterflies and moths</name>
    <dbReference type="NCBI Taxonomy" id="7088"/>
</organismHost>
<gene>
    <name type="primary">VLF-1</name>
</gene>
<dbReference type="EMBL" id="L22858">
    <property type="protein sequence ID" value="AAA66707.1"/>
    <property type="molecule type" value="Genomic_DNA"/>
</dbReference>
<dbReference type="EMBL" id="X71415">
    <property type="protein sequence ID" value="CAA50540.1"/>
    <property type="molecule type" value="Genomic_DNA"/>
</dbReference>
<dbReference type="EMBL" id="L35905">
    <property type="protein sequence ID" value="AAA62646.1"/>
    <property type="molecule type" value="Genomic_DNA"/>
</dbReference>
<dbReference type="PIR" id="F72859">
    <property type="entry name" value="F72859"/>
</dbReference>
<dbReference type="KEGG" id="vg:1403910"/>
<dbReference type="OrthoDB" id="5217at10239"/>
<dbReference type="Proteomes" id="UP000008292">
    <property type="component" value="Segment"/>
</dbReference>
<dbReference type="GO" id="GO:0003677">
    <property type="term" value="F:DNA binding"/>
    <property type="evidence" value="ECO:0007669"/>
    <property type="project" value="UniProtKB-KW"/>
</dbReference>
<dbReference type="GO" id="GO:0015074">
    <property type="term" value="P:DNA integration"/>
    <property type="evidence" value="ECO:0007669"/>
    <property type="project" value="InterPro"/>
</dbReference>
<dbReference type="GO" id="GO:0006310">
    <property type="term" value="P:DNA recombination"/>
    <property type="evidence" value="ECO:0007669"/>
    <property type="project" value="UniProtKB-KW"/>
</dbReference>
<dbReference type="CDD" id="cd00397">
    <property type="entry name" value="DNA_BRE_C"/>
    <property type="match status" value="1"/>
</dbReference>
<dbReference type="Gene3D" id="1.10.443.10">
    <property type="entry name" value="Intergrase catalytic core"/>
    <property type="match status" value="1"/>
</dbReference>
<dbReference type="InterPro" id="IPR011010">
    <property type="entry name" value="DNA_brk_join_enz"/>
</dbReference>
<dbReference type="InterPro" id="IPR013762">
    <property type="entry name" value="Integrase-like_cat_sf"/>
</dbReference>
<dbReference type="InterPro" id="IPR002104">
    <property type="entry name" value="Integrase_catalytic"/>
</dbReference>
<dbReference type="InterPro" id="IPR050090">
    <property type="entry name" value="Tyrosine_recombinase_XerCD"/>
</dbReference>
<dbReference type="PANTHER" id="PTHR30349:SF41">
    <property type="entry name" value="INTEGRASE_RECOMBINASE PROTEIN MJ0367-RELATED"/>
    <property type="match status" value="1"/>
</dbReference>
<dbReference type="PANTHER" id="PTHR30349">
    <property type="entry name" value="PHAGE INTEGRASE-RELATED"/>
    <property type="match status" value="1"/>
</dbReference>
<dbReference type="Pfam" id="PF00589">
    <property type="entry name" value="Phage_integrase"/>
    <property type="match status" value="1"/>
</dbReference>
<dbReference type="SUPFAM" id="SSF56349">
    <property type="entry name" value="DNA breaking-rejoining enzymes"/>
    <property type="match status" value="1"/>
</dbReference>
<dbReference type="PROSITE" id="PS51898">
    <property type="entry name" value="TYR_RECOMBINASE"/>
    <property type="match status" value="1"/>
</dbReference>
<organism>
    <name type="scientific">Autographa californica nuclear polyhedrosis virus</name>
    <name type="common">AcMNPV</name>
    <dbReference type="NCBI Taxonomy" id="46015"/>
    <lineage>
        <taxon>Viruses</taxon>
        <taxon>Viruses incertae sedis</taxon>
        <taxon>Naldaviricetes</taxon>
        <taxon>Lefavirales</taxon>
        <taxon>Baculoviridae</taxon>
        <taxon>Alphabaculovirus</taxon>
        <taxon>Alphabaculovirus aucalifornicae</taxon>
    </lineage>
</organism>
<protein>
    <recommendedName>
        <fullName>Very late expression factor 1</fullName>
    </recommendedName>
</protein>
<keyword id="KW-0233">DNA recombination</keyword>
<keyword id="KW-0238">DNA-binding</keyword>
<keyword id="KW-1185">Reference proteome</keyword>
<keyword id="KW-0804">Transcription</keyword>
<keyword id="KW-0805">Transcription regulation</keyword>